<organism>
    <name type="scientific">Triticum aestivum</name>
    <name type="common">Wheat</name>
    <dbReference type="NCBI Taxonomy" id="4565"/>
    <lineage>
        <taxon>Eukaryota</taxon>
        <taxon>Viridiplantae</taxon>
        <taxon>Streptophyta</taxon>
        <taxon>Embryophyta</taxon>
        <taxon>Tracheophyta</taxon>
        <taxon>Spermatophyta</taxon>
        <taxon>Magnoliopsida</taxon>
        <taxon>Liliopsida</taxon>
        <taxon>Poales</taxon>
        <taxon>Poaceae</taxon>
        <taxon>BOP clade</taxon>
        <taxon>Pooideae</taxon>
        <taxon>Triticodae</taxon>
        <taxon>Triticeae</taxon>
        <taxon>Triticinae</taxon>
        <taxon>Triticum</taxon>
    </lineage>
</organism>
<geneLocation type="chloroplast"/>
<proteinExistence type="inferred from homology"/>
<dbReference type="EMBL" id="AB042240">
    <property type="protein sequence ID" value="BAB47080.1"/>
    <property type="molecule type" value="Genomic_DNA"/>
</dbReference>
<dbReference type="EMBL" id="AB042240">
    <property type="protein sequence ID" value="BAB47092.1"/>
    <property type="molecule type" value="Genomic_DNA"/>
</dbReference>
<dbReference type="SMR" id="P69661"/>
<dbReference type="STRING" id="4565.P69661"/>
<dbReference type="PaxDb" id="4565-EPlTAEP00000010077"/>
<dbReference type="EnsemblPlants" id="TraesARI3B03G01635500.1">
    <property type="protein sequence ID" value="TraesARI3B03G01635500.1.CDS1"/>
    <property type="gene ID" value="TraesARI3B03G01635500"/>
</dbReference>
<dbReference type="EnsemblPlants" id="TraesCS4B02G124900.1">
    <property type="protein sequence ID" value="TraesCS4B02G124900.1.cds1"/>
    <property type="gene ID" value="TraesCS4B02G124900"/>
</dbReference>
<dbReference type="EnsemblPlants" id="TraesCS4B03G0289000.1">
    <property type="protein sequence ID" value="TraesCS4B03G0289000.1.CDS1"/>
    <property type="gene ID" value="TraesCS4B03G0289000"/>
</dbReference>
<dbReference type="EnsemblPlants" id="TraesJUL7B03G04254630.1">
    <property type="protein sequence ID" value="TraesJUL7B03G04254630.1.CDS1"/>
    <property type="gene ID" value="TraesJUL7B03G04254630"/>
</dbReference>
<dbReference type="EnsemblPlants" id="TraesKAR4A01G0000230.1">
    <property type="protein sequence ID" value="cds.TraesKAR4A01G0000230.1"/>
    <property type="gene ID" value="TraesKAR4A01G0000230"/>
</dbReference>
<dbReference type="EnsemblPlants" id="TraesKAR4A01G0000350.1">
    <property type="protein sequence ID" value="cds.TraesKAR4A01G0000350.1"/>
    <property type="gene ID" value="TraesKAR4A01G0000350"/>
</dbReference>
<dbReference type="EnsemblPlants" id="TraesKAR6B01G0219930.1">
    <property type="protein sequence ID" value="cds.TraesKAR6B01G0219930.1"/>
    <property type="gene ID" value="TraesKAR6B01G0219930"/>
</dbReference>
<dbReference type="EnsemblPlants" id="TraesKAR6B01G0220050.1">
    <property type="protein sequence ID" value="cds.TraesKAR6B01G0220050.1"/>
    <property type="gene ID" value="TraesKAR6B01G0220050"/>
</dbReference>
<dbReference type="EnsemblPlants" id="TraesKARUn01G0025860.1">
    <property type="protein sequence ID" value="cds.TraesKARUn01G0025860.1"/>
    <property type="gene ID" value="TraesKARUn01G0025860"/>
</dbReference>
<dbReference type="EnsemblPlants" id="TraesKARUn01G0026080.1">
    <property type="protein sequence ID" value="cds.TraesKARUn01G0026080.1"/>
    <property type="gene ID" value="TraesKARUn01G0026080"/>
</dbReference>
<dbReference type="EnsemblPlants" id="TraesKARUn01G0026240.1">
    <property type="protein sequence ID" value="cds.TraesKARUn01G0026240.1"/>
    <property type="gene ID" value="TraesKARUn01G0026240"/>
</dbReference>
<dbReference type="EnsemblPlants" id="TraesKARUn01G0028190.1">
    <property type="protein sequence ID" value="cds.TraesKARUn01G0028190.1"/>
    <property type="gene ID" value="TraesKARUn01G0028190"/>
</dbReference>
<dbReference type="EnsemblPlants" id="TraesKARUn01G0028550.1">
    <property type="protein sequence ID" value="cds.TraesKARUn01G0028550.1"/>
    <property type="gene ID" value="TraesKARUn01G0028550"/>
</dbReference>
<dbReference type="EnsemblPlants" id="TraesKARUn01G0028640.1">
    <property type="protein sequence ID" value="cds.TraesKARUn01G0028640.1"/>
    <property type="gene ID" value="TraesKARUn01G0028640"/>
</dbReference>
<dbReference type="EnsemblPlants" id="TraesKARUn01G0029150.1">
    <property type="protein sequence ID" value="cds.TraesKARUn01G0029150.1"/>
    <property type="gene ID" value="TraesKARUn01G0029150"/>
</dbReference>
<dbReference type="EnsemblPlants" id="TraesKARUn01G0029260.1">
    <property type="protein sequence ID" value="cds.TraesKARUn01G0029260.1"/>
    <property type="gene ID" value="TraesKARUn01G0029260"/>
</dbReference>
<dbReference type="EnsemblPlants" id="TraesKARUn01G0029380.1">
    <property type="protein sequence ID" value="cds.TraesKARUn01G0029380.1"/>
    <property type="gene ID" value="TraesKARUn01G0029380"/>
</dbReference>
<dbReference type="EnsemblPlants" id="TraesKARUn01G0030060.1">
    <property type="protein sequence ID" value="cds.TraesKARUn01G0030060.1"/>
    <property type="gene ID" value="TraesKARUn01G0030060"/>
</dbReference>
<dbReference type="EnsemblPlants" id="TraesKARUn01G0032150.1">
    <property type="protein sequence ID" value="cds.TraesKARUn01G0032150.1"/>
    <property type="gene ID" value="TraesKARUn01G0032150"/>
</dbReference>
<dbReference type="EnsemblPlants" id="TraesKARUn01G0033900.1">
    <property type="protein sequence ID" value="cds.TraesKARUn01G0033900.1"/>
    <property type="gene ID" value="TraesKARUn01G0033900"/>
</dbReference>
<dbReference type="EnsemblPlants" id="TraesKARUn01G0033970.1">
    <property type="protein sequence ID" value="cds.TraesKARUn01G0033970.1"/>
    <property type="gene ID" value="TraesKARUn01G0033970"/>
</dbReference>
<dbReference type="EnsemblPlants" id="TraesKARUn01G0034030.1">
    <property type="protein sequence ID" value="cds.TraesKARUn01G0034030.1"/>
    <property type="gene ID" value="TraesKARUn01G0034030"/>
</dbReference>
<dbReference type="EnsemblPlants" id="TraesKARUn01G0034270.1">
    <property type="protein sequence ID" value="cds.TraesKARUn01G0034270.1"/>
    <property type="gene ID" value="TraesKARUn01G0034270"/>
</dbReference>
<dbReference type="EnsemblPlants" id="TraesKARUn01G0074300.1">
    <property type="protein sequence ID" value="cds.TraesKARUn01G0074300.1"/>
    <property type="gene ID" value="TraesKARUn01G0074300"/>
</dbReference>
<dbReference type="EnsemblPlants" id="TraesKARUn01G0074460.1">
    <property type="protein sequence ID" value="cds.TraesKARUn01G0074460.1"/>
    <property type="gene ID" value="TraesKARUn01G0074460"/>
</dbReference>
<dbReference type="EnsemblPlants" id="TraesKARUn01G0074630.1">
    <property type="protein sequence ID" value="cds.TraesKARUn01G0074630.1"/>
    <property type="gene ID" value="TraesKARUn01G0074630"/>
</dbReference>
<dbReference type="EnsemblPlants" id="TraesKARUn01G0074750.1">
    <property type="protein sequence ID" value="cds.TraesKARUn01G0074750.1"/>
    <property type="gene ID" value="TraesKARUn01G0074750"/>
</dbReference>
<dbReference type="EnsemblPlants" id="TraesKARUn01G0075000.1">
    <property type="protein sequence ID" value="cds.TraesKARUn01G0075000.1"/>
    <property type="gene ID" value="TraesKARUn01G0075000"/>
</dbReference>
<dbReference type="EnsemblPlants" id="TraesKARUn01G0075130.1">
    <property type="protein sequence ID" value="cds.TraesKARUn01G0075130.1"/>
    <property type="gene ID" value="TraesKARUn01G0075130"/>
</dbReference>
<dbReference type="EnsemblPlants" id="TraesKARUn01G0083330.1">
    <property type="protein sequence ID" value="cds.TraesKARUn01G0083330.1"/>
    <property type="gene ID" value="TraesKARUn01G0083330"/>
</dbReference>
<dbReference type="EnsemblPlants" id="TraesKARUn01G0084620.1">
    <property type="protein sequence ID" value="cds.TraesKARUn01G0084620.1"/>
    <property type="gene ID" value="TraesKARUn01G0084620"/>
</dbReference>
<dbReference type="EnsemblPlants" id="TraesKARUn01G0087980.1">
    <property type="protein sequence ID" value="cds.TraesKARUn01G0087980.1"/>
    <property type="gene ID" value="TraesKARUn01G0087980"/>
</dbReference>
<dbReference type="EnsemblPlants" id="TraesKARUn01G0088550.1">
    <property type="protein sequence ID" value="cds.TraesKARUn01G0088550.1"/>
    <property type="gene ID" value="TraesKARUn01G0088550"/>
</dbReference>
<dbReference type="EnsemblPlants" id="TraesKARUn01G0088970.1">
    <property type="protein sequence ID" value="cds.TraesKARUn01G0088970.1"/>
    <property type="gene ID" value="TraesKARUn01G0088970"/>
</dbReference>
<dbReference type="EnsemblPlants" id="TraesKARUn01G0089450.1">
    <property type="protein sequence ID" value="cds.TraesKARUn01G0089450.1"/>
    <property type="gene ID" value="TraesKARUn01G0089450"/>
</dbReference>
<dbReference type="EnsemblPlants" id="TraesKARUn01G0089510.1">
    <property type="protein sequence ID" value="cds.TraesKARUn01G0089510.1"/>
    <property type="gene ID" value="TraesKARUn01G0089510"/>
</dbReference>
<dbReference type="EnsemblPlants" id="TraesKARUn01G0089690.1">
    <property type="protein sequence ID" value="cds.TraesKARUn01G0089690.1"/>
    <property type="gene ID" value="TraesKARUn01G0089690"/>
</dbReference>
<dbReference type="EnsemblPlants" id="TraesKARUn01G0090020.1">
    <property type="protein sequence ID" value="cds.TraesKARUn01G0090020.1"/>
    <property type="gene ID" value="TraesKARUn01G0090020"/>
</dbReference>
<dbReference type="EnsemblPlants" id="TraesKARUn01G0090400.1">
    <property type="protein sequence ID" value="cds.TraesKARUn01G0090400.1"/>
    <property type="gene ID" value="TraesKARUn01G0090400"/>
</dbReference>
<dbReference type="EnsemblPlants" id="TraesKARUn01G0090460.1">
    <property type="protein sequence ID" value="cds.TraesKARUn01G0090460.1"/>
    <property type="gene ID" value="TraesKARUn01G0090460"/>
</dbReference>
<dbReference type="EnsemblPlants" id="TraesKARUn01G0090940.1">
    <property type="protein sequence ID" value="cds.TraesKARUn01G0090940.1"/>
    <property type="gene ID" value="TraesKARUn01G0090940"/>
</dbReference>
<dbReference type="EnsemblPlants" id="TraesKARUn01G0091280.1">
    <property type="protein sequence ID" value="cds.TraesKARUn01G0091280.1"/>
    <property type="gene ID" value="TraesKARUn01G0091280"/>
</dbReference>
<dbReference type="EnsemblPlants" id="TraesKARUn01G0091370.1">
    <property type="protein sequence ID" value="cds.TraesKARUn01G0091370.1"/>
    <property type="gene ID" value="TraesKARUn01G0091370"/>
</dbReference>
<dbReference type="EnsemblPlants" id="TraesKARUn01G0094680.1">
    <property type="protein sequence ID" value="cds.TraesKARUn01G0094680.1"/>
    <property type="gene ID" value="TraesKARUn01G0094680"/>
</dbReference>
<dbReference type="EnsemblPlants" id="TraesKARUn01G0103280.1">
    <property type="protein sequence ID" value="cds.TraesKARUn01G0103280.1"/>
    <property type="gene ID" value="TraesKARUn01G0103280"/>
</dbReference>
<dbReference type="EnsemblPlants" id="TraesKARUn01G0103440.1">
    <property type="protein sequence ID" value="cds.TraesKARUn01G0103440.1"/>
    <property type="gene ID" value="TraesKARUn01G0103440"/>
</dbReference>
<dbReference type="EnsemblPlants" id="TraesKARUn01G0103780.1">
    <property type="protein sequence ID" value="cds.TraesKARUn01G0103780.1"/>
    <property type="gene ID" value="TraesKARUn01G0103780"/>
</dbReference>
<dbReference type="EnsemblPlants" id="TraesKARUn01G0103950.1">
    <property type="protein sequence ID" value="cds.TraesKARUn01G0103950.1"/>
    <property type="gene ID" value="TraesKARUn01G0103950"/>
</dbReference>
<dbReference type="EnsemblPlants" id="TraesKARUn01G0104090.1">
    <property type="protein sequence ID" value="cds.TraesKARUn01G0104090.1"/>
    <property type="gene ID" value="TraesKARUn01G0104090"/>
</dbReference>
<dbReference type="EnsemblPlants" id="TraesKARUn01G0104480.1">
    <property type="protein sequence ID" value="cds.TraesKARUn01G0104480.1"/>
    <property type="gene ID" value="TraesKARUn01G0104480"/>
</dbReference>
<dbReference type="EnsemblPlants" id="TraesKARUn01G0173210.1">
    <property type="protein sequence ID" value="cds.TraesKARUn01G0173210.1"/>
    <property type="gene ID" value="TraesKARUn01G0173210"/>
</dbReference>
<dbReference type="EnsemblPlants" id="TraesKARUn01G0173510.1">
    <property type="protein sequence ID" value="cds.TraesKARUn01G0173510.1"/>
    <property type="gene ID" value="TraesKARUn01G0173510"/>
</dbReference>
<dbReference type="EnsemblPlants" id="TraesKARUn01G0173720.1">
    <property type="protein sequence ID" value="cds.TraesKARUn01G0173720.1"/>
    <property type="gene ID" value="TraesKARUn01G0173720"/>
</dbReference>
<dbReference type="EnsemblPlants" id="TraesKARUn01G0173780.1">
    <property type="protein sequence ID" value="cds.TraesKARUn01G0173780.1"/>
    <property type="gene ID" value="TraesKARUn01G0173780"/>
</dbReference>
<dbReference type="EnsemblPlants" id="TraesKARUn01G0173960.1">
    <property type="protein sequence ID" value="cds.TraesKARUn01G0173960.1"/>
    <property type="gene ID" value="TraesKARUn01G0173960"/>
</dbReference>
<dbReference type="EnsemblPlants" id="TraesKARUn01G0174070.1">
    <property type="protein sequence ID" value="cds.TraesKARUn01G0174070.1"/>
    <property type="gene ID" value="TraesKARUn01G0174070"/>
</dbReference>
<dbReference type="EnsemblPlants" id="TraesKARUn01G0177870.1">
    <property type="protein sequence ID" value="cds.TraesKARUn01G0177870.1"/>
    <property type="gene ID" value="TraesKARUn01G0177870"/>
</dbReference>
<dbReference type="EnsemblPlants" id="TraesKARUn01G0180790.1">
    <property type="protein sequence ID" value="cds.TraesKARUn01G0180790.1"/>
    <property type="gene ID" value="TraesKARUn01G0180790"/>
</dbReference>
<dbReference type="EnsemblPlants" id="TraesKARUn01G0183260.1">
    <property type="protein sequence ID" value="cds.TraesKARUn01G0183260.1"/>
    <property type="gene ID" value="TraesKARUn01G0183260"/>
</dbReference>
<dbReference type="EnsemblPlants" id="TraesKARUn01G0187770.1">
    <property type="protein sequence ID" value="cds.TraesKARUn01G0187770.1"/>
    <property type="gene ID" value="TraesKARUn01G0187770"/>
</dbReference>
<dbReference type="EnsemblPlants" id="TraesKARUn01G0188440.1">
    <property type="protein sequence ID" value="cds.TraesKARUn01G0188440.1"/>
    <property type="gene ID" value="TraesKARUn01G0188440"/>
</dbReference>
<dbReference type="EnsemblPlants" id="TraesLAC7A03G03980790.1">
    <property type="protein sequence ID" value="TraesLAC7A03G03980790.1.CDS1"/>
    <property type="gene ID" value="TraesLAC7A03G03980790"/>
</dbReference>
<dbReference type="EnsemblPlants" id="TraesLAC7B03G04160210.1">
    <property type="protein sequence ID" value="TraesLAC7B03G04160210.1.CDS1"/>
    <property type="gene ID" value="TraesLAC7B03G04160210"/>
</dbReference>
<dbReference type="EnsemblPlants" id="TraesLDM3B03G01608660.1">
    <property type="protein sequence ID" value="TraesLDM3B03G01608660.1.CDS1"/>
    <property type="gene ID" value="TraesLDM3B03G01608660"/>
</dbReference>
<dbReference type="EnsemblPlants" id="TraesLDM7B03G04204460.1">
    <property type="protein sequence ID" value="TraesLDM7B03G04204460.1.CDS1"/>
    <property type="gene ID" value="TraesLDM7B03G04204460"/>
</dbReference>
<dbReference type="EnsemblPlants" id="TraesNOR7B03G04262470.1">
    <property type="protein sequence ID" value="TraesNOR7B03G04262470.1.CDS1"/>
    <property type="gene ID" value="TraesNOR7B03G04262470"/>
</dbReference>
<dbReference type="EnsemblPlants" id="TraesPARA_EIv1.0_2014440.1">
    <property type="protein sequence ID" value="TraesPARA_EIv1.0_2014440.1.CDS1"/>
    <property type="gene ID" value="TraesPARA_EIv1.0_2014440"/>
</dbReference>
<dbReference type="EnsemblPlants" id="TraesPARA_EIv1.0_2644530.1">
    <property type="protein sequence ID" value="TraesPARA_EIv1.0_2644530.1.CDS1"/>
    <property type="gene ID" value="TraesPARA_EIv1.0_2644530"/>
</dbReference>
<dbReference type="EnsemblPlants" id="TraesPARA_EIv1.0_2647330.1">
    <property type="protein sequence ID" value="TraesPARA_EIv1.0_2647330.1.CDS1"/>
    <property type="gene ID" value="TraesPARA_EIv1.0_2647330"/>
</dbReference>
<dbReference type="EnsemblPlants" id="TraesPARA_EIv1.0_2648380.1">
    <property type="protein sequence ID" value="TraesPARA_EIv1.0_2648380.1.CDS1"/>
    <property type="gene ID" value="TraesPARA_EIv1.0_2648380"/>
</dbReference>
<dbReference type="EnsemblPlants" id="TraesPARA_EIv1.0_2648780.1">
    <property type="protein sequence ID" value="TraesPARA_EIv1.0_2648780.1.CDS1"/>
    <property type="gene ID" value="TraesPARA_EIv1.0_2648780"/>
</dbReference>
<dbReference type="EnsemblPlants" id="TraesPARA_EIv1.0_2655680.1">
    <property type="protein sequence ID" value="TraesPARA_EIv1.0_2655680.1.CDS1"/>
    <property type="gene ID" value="TraesPARA_EIv1.0_2655680"/>
</dbReference>
<dbReference type="EnsemblPlants" id="TraesPARA_EIv1.0_2672930.1">
    <property type="protein sequence ID" value="TraesPARA_EIv1.0_2672930.1.CDS1"/>
    <property type="gene ID" value="TraesPARA_EIv1.0_2672930"/>
</dbReference>
<dbReference type="EnsemblPlants" id="TraesPARA_EIv1.0_2673990.1">
    <property type="protein sequence ID" value="TraesPARA_EIv1.0_2673990.1.CDS1"/>
    <property type="gene ID" value="TraesPARA_EIv1.0_2673990"/>
</dbReference>
<dbReference type="EnsemblPlants" id="TraesPARA_EIv1.0_2677720.1">
    <property type="protein sequence ID" value="TraesPARA_EIv1.0_2677720.1.CDS1"/>
    <property type="gene ID" value="TraesPARA_EIv1.0_2677720"/>
</dbReference>
<dbReference type="EnsemblPlants" id="TraesPARA_EIv1.0_2679950.1">
    <property type="protein sequence ID" value="TraesPARA_EIv1.0_2679950.1.CDS1"/>
    <property type="gene ID" value="TraesPARA_EIv1.0_2679950"/>
</dbReference>
<dbReference type="EnsemblPlants" id="TraesPARA_EIv1.0_2680580.1">
    <property type="protein sequence ID" value="TraesPARA_EIv1.0_2680580.1.CDS1"/>
    <property type="gene ID" value="TraesPARA_EIv1.0_2680580"/>
</dbReference>
<dbReference type="EnsemblPlants" id="TraesPARA_EIv1.0_2680630.1">
    <property type="protein sequence ID" value="TraesPARA_EIv1.0_2680630.1.CDS1"/>
    <property type="gene ID" value="TraesPARA_EIv1.0_2680630"/>
</dbReference>
<dbReference type="EnsemblPlants" id="TraesPARA_EIv1.0_2681560.1">
    <property type="protein sequence ID" value="TraesPARA_EIv1.0_2681560.1.CDS1"/>
    <property type="gene ID" value="TraesPARA_EIv1.0_2681560"/>
</dbReference>
<dbReference type="EnsemblPlants" id="TraesPARA_EIv1.0_2681880.1">
    <property type="protein sequence ID" value="TraesPARA_EIv1.0_2681880.1.CDS1"/>
    <property type="gene ID" value="TraesPARA_EIv1.0_2681880"/>
</dbReference>
<dbReference type="EnsemblPlants" id="TraesPARA_EIv1.0_2681910.1">
    <property type="protein sequence ID" value="TraesPARA_EIv1.0_2681910.1.CDS1"/>
    <property type="gene ID" value="TraesPARA_EIv1.0_2681910"/>
</dbReference>
<dbReference type="EnsemblPlants" id="TraesRN2D0101217400.1">
    <property type="protein sequence ID" value="TraesRN2D0101217400.1"/>
    <property type="gene ID" value="TraesRN2D0101217400"/>
</dbReference>
<dbReference type="EnsemblPlants" id="TraesRN3B0100445900.1">
    <property type="protein sequence ID" value="TraesRN3B0100445900.1"/>
    <property type="gene ID" value="TraesRN3B0100445900"/>
</dbReference>
<dbReference type="EnsemblPlants" id="TraesRN3D0101151700.1">
    <property type="protein sequence ID" value="TraesRN3D0101151700.1"/>
    <property type="gene ID" value="TraesRN3D0101151700"/>
</dbReference>
<dbReference type="EnsemblPlants" id="TraesRN5D0100889900.1">
    <property type="protein sequence ID" value="TraesRN5D0100889900.1"/>
    <property type="gene ID" value="TraesRN5D0100889900"/>
</dbReference>
<dbReference type="EnsemblPlants" id="TraesRN7A0100679400.1">
    <property type="protein sequence ID" value="TraesRN7A0100679400.1"/>
    <property type="gene ID" value="TraesRN7A0100679400"/>
</dbReference>
<dbReference type="EnsemblPlants" id="TraesSTA6B03G03545790.1">
    <property type="protein sequence ID" value="TraesSTA6B03G03545790.1.CDS1"/>
    <property type="gene ID" value="TraesSTA6B03G03545790"/>
</dbReference>
<dbReference type="Gramene" id="TraesARI3B03G01635500.1">
    <property type="protein sequence ID" value="TraesARI3B03G01635500.1.CDS1"/>
    <property type="gene ID" value="TraesARI3B03G01635500"/>
</dbReference>
<dbReference type="Gramene" id="TraesCS4B02G124900.1">
    <property type="protein sequence ID" value="TraesCS4B02G124900.1.cds1"/>
    <property type="gene ID" value="TraesCS4B02G124900"/>
</dbReference>
<dbReference type="Gramene" id="TraesCS4B03G0289000.1">
    <property type="protein sequence ID" value="TraesCS4B03G0289000.1.CDS1"/>
    <property type="gene ID" value="TraesCS4B03G0289000"/>
</dbReference>
<dbReference type="Gramene" id="TraesJUL7B03G04254630.1">
    <property type="protein sequence ID" value="TraesJUL7B03G04254630.1.CDS1"/>
    <property type="gene ID" value="TraesJUL7B03G04254630"/>
</dbReference>
<dbReference type="Gramene" id="TraesKAR4A01G0000230.1">
    <property type="protein sequence ID" value="cds.TraesKAR4A01G0000230.1"/>
    <property type="gene ID" value="TraesKAR4A01G0000230"/>
</dbReference>
<dbReference type="Gramene" id="TraesKAR4A01G0000350.1">
    <property type="protein sequence ID" value="cds.TraesKAR4A01G0000350.1"/>
    <property type="gene ID" value="TraesKAR4A01G0000350"/>
</dbReference>
<dbReference type="Gramene" id="TraesKAR6B01G0219930.1">
    <property type="protein sequence ID" value="cds.TraesKAR6B01G0219930.1"/>
    <property type="gene ID" value="TraesKAR6B01G0219930"/>
</dbReference>
<dbReference type="Gramene" id="TraesKAR6B01G0220050.1">
    <property type="protein sequence ID" value="cds.TraesKAR6B01G0220050.1"/>
    <property type="gene ID" value="TraesKAR6B01G0220050"/>
</dbReference>
<dbReference type="Gramene" id="TraesKARUn01G0025860.1">
    <property type="protein sequence ID" value="cds.TraesKARUn01G0025860.1"/>
    <property type="gene ID" value="TraesKARUn01G0025860"/>
</dbReference>
<dbReference type="Gramene" id="TraesKARUn01G0026080.1">
    <property type="protein sequence ID" value="cds.TraesKARUn01G0026080.1"/>
    <property type="gene ID" value="TraesKARUn01G0026080"/>
</dbReference>
<dbReference type="Gramene" id="TraesKARUn01G0026240.1">
    <property type="protein sequence ID" value="cds.TraesKARUn01G0026240.1"/>
    <property type="gene ID" value="TraesKARUn01G0026240"/>
</dbReference>
<dbReference type="Gramene" id="TraesKARUn01G0028190.1">
    <property type="protein sequence ID" value="cds.TraesKARUn01G0028190.1"/>
    <property type="gene ID" value="TraesKARUn01G0028190"/>
</dbReference>
<dbReference type="Gramene" id="TraesKARUn01G0028550.1">
    <property type="protein sequence ID" value="cds.TraesKARUn01G0028550.1"/>
    <property type="gene ID" value="TraesKARUn01G0028550"/>
</dbReference>
<dbReference type="Gramene" id="TraesKARUn01G0028640.1">
    <property type="protein sequence ID" value="cds.TraesKARUn01G0028640.1"/>
    <property type="gene ID" value="TraesKARUn01G0028640"/>
</dbReference>
<dbReference type="Gramene" id="TraesKARUn01G0029150.1">
    <property type="protein sequence ID" value="cds.TraesKARUn01G0029150.1"/>
    <property type="gene ID" value="TraesKARUn01G0029150"/>
</dbReference>
<dbReference type="Gramene" id="TraesKARUn01G0029260.1">
    <property type="protein sequence ID" value="cds.TraesKARUn01G0029260.1"/>
    <property type="gene ID" value="TraesKARUn01G0029260"/>
</dbReference>
<dbReference type="Gramene" id="TraesKARUn01G0029380.1">
    <property type="protein sequence ID" value="cds.TraesKARUn01G0029380.1"/>
    <property type="gene ID" value="TraesKARUn01G0029380"/>
</dbReference>
<dbReference type="Gramene" id="TraesKARUn01G0030060.1">
    <property type="protein sequence ID" value="cds.TraesKARUn01G0030060.1"/>
    <property type="gene ID" value="TraesKARUn01G0030060"/>
</dbReference>
<dbReference type="Gramene" id="TraesKARUn01G0032150.1">
    <property type="protein sequence ID" value="cds.TraesKARUn01G0032150.1"/>
    <property type="gene ID" value="TraesKARUn01G0032150"/>
</dbReference>
<dbReference type="Gramene" id="TraesKARUn01G0033900.1">
    <property type="protein sequence ID" value="cds.TraesKARUn01G0033900.1"/>
    <property type="gene ID" value="TraesKARUn01G0033900"/>
</dbReference>
<dbReference type="Gramene" id="TraesKARUn01G0033970.1">
    <property type="protein sequence ID" value="cds.TraesKARUn01G0033970.1"/>
    <property type="gene ID" value="TraesKARUn01G0033970"/>
</dbReference>
<dbReference type="Gramene" id="TraesKARUn01G0034030.1">
    <property type="protein sequence ID" value="cds.TraesKARUn01G0034030.1"/>
    <property type="gene ID" value="TraesKARUn01G0034030"/>
</dbReference>
<dbReference type="Gramene" id="TraesKARUn01G0034270.1">
    <property type="protein sequence ID" value="cds.TraesKARUn01G0034270.1"/>
    <property type="gene ID" value="TraesKARUn01G0034270"/>
</dbReference>
<dbReference type="Gramene" id="TraesKARUn01G0074300.1">
    <property type="protein sequence ID" value="cds.TraesKARUn01G0074300.1"/>
    <property type="gene ID" value="TraesKARUn01G0074300"/>
</dbReference>
<dbReference type="Gramene" id="TraesKARUn01G0074460.1">
    <property type="protein sequence ID" value="cds.TraesKARUn01G0074460.1"/>
    <property type="gene ID" value="TraesKARUn01G0074460"/>
</dbReference>
<dbReference type="Gramene" id="TraesKARUn01G0074630.1">
    <property type="protein sequence ID" value="cds.TraesKARUn01G0074630.1"/>
    <property type="gene ID" value="TraesKARUn01G0074630"/>
</dbReference>
<dbReference type="Gramene" id="TraesKARUn01G0074750.1">
    <property type="protein sequence ID" value="cds.TraesKARUn01G0074750.1"/>
    <property type="gene ID" value="TraesKARUn01G0074750"/>
</dbReference>
<dbReference type="Gramene" id="TraesKARUn01G0075000.1">
    <property type="protein sequence ID" value="cds.TraesKARUn01G0075000.1"/>
    <property type="gene ID" value="TraesKARUn01G0075000"/>
</dbReference>
<dbReference type="Gramene" id="TraesKARUn01G0075130.1">
    <property type="protein sequence ID" value="cds.TraesKARUn01G0075130.1"/>
    <property type="gene ID" value="TraesKARUn01G0075130"/>
</dbReference>
<dbReference type="Gramene" id="TraesKARUn01G0083330.1">
    <property type="protein sequence ID" value="cds.TraesKARUn01G0083330.1"/>
    <property type="gene ID" value="TraesKARUn01G0083330"/>
</dbReference>
<dbReference type="Gramene" id="TraesKARUn01G0084620.1">
    <property type="protein sequence ID" value="cds.TraesKARUn01G0084620.1"/>
    <property type="gene ID" value="TraesKARUn01G0084620"/>
</dbReference>
<dbReference type="Gramene" id="TraesKARUn01G0087980.1">
    <property type="protein sequence ID" value="cds.TraesKARUn01G0087980.1"/>
    <property type="gene ID" value="TraesKARUn01G0087980"/>
</dbReference>
<dbReference type="Gramene" id="TraesKARUn01G0088550.1">
    <property type="protein sequence ID" value="cds.TraesKARUn01G0088550.1"/>
    <property type="gene ID" value="TraesKARUn01G0088550"/>
</dbReference>
<dbReference type="Gramene" id="TraesKARUn01G0088970.1">
    <property type="protein sequence ID" value="cds.TraesKARUn01G0088970.1"/>
    <property type="gene ID" value="TraesKARUn01G0088970"/>
</dbReference>
<dbReference type="Gramene" id="TraesKARUn01G0089450.1">
    <property type="protein sequence ID" value="cds.TraesKARUn01G0089450.1"/>
    <property type="gene ID" value="TraesKARUn01G0089450"/>
</dbReference>
<dbReference type="Gramene" id="TraesKARUn01G0089510.1">
    <property type="protein sequence ID" value="cds.TraesKARUn01G0089510.1"/>
    <property type="gene ID" value="TraesKARUn01G0089510"/>
</dbReference>
<dbReference type="Gramene" id="TraesKARUn01G0089690.1">
    <property type="protein sequence ID" value="cds.TraesKARUn01G0089690.1"/>
    <property type="gene ID" value="TraesKARUn01G0089690"/>
</dbReference>
<dbReference type="Gramene" id="TraesKARUn01G0090020.1">
    <property type="protein sequence ID" value="cds.TraesKARUn01G0090020.1"/>
    <property type="gene ID" value="TraesKARUn01G0090020"/>
</dbReference>
<dbReference type="Gramene" id="TraesKARUn01G0090400.1">
    <property type="protein sequence ID" value="cds.TraesKARUn01G0090400.1"/>
    <property type="gene ID" value="TraesKARUn01G0090400"/>
</dbReference>
<dbReference type="Gramene" id="TraesKARUn01G0090460.1">
    <property type="protein sequence ID" value="cds.TraesKARUn01G0090460.1"/>
    <property type="gene ID" value="TraesKARUn01G0090460"/>
</dbReference>
<dbReference type="Gramene" id="TraesKARUn01G0090940.1">
    <property type="protein sequence ID" value="cds.TraesKARUn01G0090940.1"/>
    <property type="gene ID" value="TraesKARUn01G0090940"/>
</dbReference>
<dbReference type="Gramene" id="TraesKARUn01G0091280.1">
    <property type="protein sequence ID" value="cds.TraesKARUn01G0091280.1"/>
    <property type="gene ID" value="TraesKARUn01G0091280"/>
</dbReference>
<dbReference type="Gramene" id="TraesKARUn01G0091370.1">
    <property type="protein sequence ID" value="cds.TraesKARUn01G0091370.1"/>
    <property type="gene ID" value="TraesKARUn01G0091370"/>
</dbReference>
<dbReference type="Gramene" id="TraesKARUn01G0094680.1">
    <property type="protein sequence ID" value="cds.TraesKARUn01G0094680.1"/>
    <property type="gene ID" value="TraesKARUn01G0094680"/>
</dbReference>
<dbReference type="Gramene" id="TraesKARUn01G0103280.1">
    <property type="protein sequence ID" value="cds.TraesKARUn01G0103280.1"/>
    <property type="gene ID" value="TraesKARUn01G0103280"/>
</dbReference>
<dbReference type="Gramene" id="TraesKARUn01G0103440.1">
    <property type="protein sequence ID" value="cds.TraesKARUn01G0103440.1"/>
    <property type="gene ID" value="TraesKARUn01G0103440"/>
</dbReference>
<dbReference type="Gramene" id="TraesKARUn01G0103780.1">
    <property type="protein sequence ID" value="cds.TraesKARUn01G0103780.1"/>
    <property type="gene ID" value="TraesKARUn01G0103780"/>
</dbReference>
<dbReference type="Gramene" id="TraesKARUn01G0103950.1">
    <property type="protein sequence ID" value="cds.TraesKARUn01G0103950.1"/>
    <property type="gene ID" value="TraesKARUn01G0103950"/>
</dbReference>
<dbReference type="Gramene" id="TraesKARUn01G0104090.1">
    <property type="protein sequence ID" value="cds.TraesKARUn01G0104090.1"/>
    <property type="gene ID" value="TraesKARUn01G0104090"/>
</dbReference>
<dbReference type="Gramene" id="TraesKARUn01G0104480.1">
    <property type="protein sequence ID" value="cds.TraesKARUn01G0104480.1"/>
    <property type="gene ID" value="TraesKARUn01G0104480"/>
</dbReference>
<dbReference type="Gramene" id="TraesKARUn01G0173210.1">
    <property type="protein sequence ID" value="cds.TraesKARUn01G0173210.1"/>
    <property type="gene ID" value="TraesKARUn01G0173210"/>
</dbReference>
<dbReference type="Gramene" id="TraesKARUn01G0173510.1">
    <property type="protein sequence ID" value="cds.TraesKARUn01G0173510.1"/>
    <property type="gene ID" value="TraesKARUn01G0173510"/>
</dbReference>
<dbReference type="Gramene" id="TraesKARUn01G0173720.1">
    <property type="protein sequence ID" value="cds.TraesKARUn01G0173720.1"/>
    <property type="gene ID" value="TraesKARUn01G0173720"/>
</dbReference>
<dbReference type="Gramene" id="TraesKARUn01G0173780.1">
    <property type="protein sequence ID" value="cds.TraesKARUn01G0173780.1"/>
    <property type="gene ID" value="TraesKARUn01G0173780"/>
</dbReference>
<dbReference type="Gramene" id="TraesKARUn01G0173960.1">
    <property type="protein sequence ID" value="cds.TraesKARUn01G0173960.1"/>
    <property type="gene ID" value="TraesKARUn01G0173960"/>
</dbReference>
<dbReference type="Gramene" id="TraesKARUn01G0174070.1">
    <property type="protein sequence ID" value="cds.TraesKARUn01G0174070.1"/>
    <property type="gene ID" value="TraesKARUn01G0174070"/>
</dbReference>
<dbReference type="Gramene" id="TraesKARUn01G0177870.1">
    <property type="protein sequence ID" value="cds.TraesKARUn01G0177870.1"/>
    <property type="gene ID" value="TraesKARUn01G0177870"/>
</dbReference>
<dbReference type="Gramene" id="TraesKARUn01G0180790.1">
    <property type="protein sequence ID" value="cds.TraesKARUn01G0180790.1"/>
    <property type="gene ID" value="TraesKARUn01G0180790"/>
</dbReference>
<dbReference type="Gramene" id="TraesKARUn01G0183260.1">
    <property type="protein sequence ID" value="cds.TraesKARUn01G0183260.1"/>
    <property type="gene ID" value="TraesKARUn01G0183260"/>
</dbReference>
<dbReference type="Gramene" id="TraesKARUn01G0187770.1">
    <property type="protein sequence ID" value="cds.TraesKARUn01G0187770.1"/>
    <property type="gene ID" value="TraesKARUn01G0187770"/>
</dbReference>
<dbReference type="Gramene" id="TraesKARUn01G0188440.1">
    <property type="protein sequence ID" value="cds.TraesKARUn01G0188440.1"/>
    <property type="gene ID" value="TraesKARUn01G0188440"/>
</dbReference>
<dbReference type="Gramene" id="TraesLAC7A03G03980790.1">
    <property type="protein sequence ID" value="TraesLAC7A03G03980790.1.CDS1"/>
    <property type="gene ID" value="TraesLAC7A03G03980790"/>
</dbReference>
<dbReference type="Gramene" id="TraesLAC7B03G04160210.1">
    <property type="protein sequence ID" value="TraesLAC7B03G04160210.1.CDS1"/>
    <property type="gene ID" value="TraesLAC7B03G04160210"/>
</dbReference>
<dbReference type="Gramene" id="TraesLDM3B03G01608660.1">
    <property type="protein sequence ID" value="TraesLDM3B03G01608660.1.CDS1"/>
    <property type="gene ID" value="TraesLDM3B03G01608660"/>
</dbReference>
<dbReference type="Gramene" id="TraesLDM7B03G04204460.1">
    <property type="protein sequence ID" value="TraesLDM7B03G04204460.1.CDS1"/>
    <property type="gene ID" value="TraesLDM7B03G04204460"/>
</dbReference>
<dbReference type="Gramene" id="TraesNOR7B03G04262470.1">
    <property type="protein sequence ID" value="TraesNOR7B03G04262470.1.CDS1"/>
    <property type="gene ID" value="TraesNOR7B03G04262470"/>
</dbReference>
<dbReference type="Gramene" id="TraesPARA_EIv1.0_2014440.1">
    <property type="protein sequence ID" value="TraesPARA_EIv1.0_2014440.1.CDS1"/>
    <property type="gene ID" value="TraesPARA_EIv1.0_2014440"/>
</dbReference>
<dbReference type="Gramene" id="TraesPARA_EIv1.0_2644530.1">
    <property type="protein sequence ID" value="TraesPARA_EIv1.0_2644530.1.CDS1"/>
    <property type="gene ID" value="TraesPARA_EIv1.0_2644530"/>
</dbReference>
<dbReference type="Gramene" id="TraesPARA_EIv1.0_2647330.1">
    <property type="protein sequence ID" value="TraesPARA_EIv1.0_2647330.1.CDS1"/>
    <property type="gene ID" value="TraesPARA_EIv1.0_2647330"/>
</dbReference>
<dbReference type="Gramene" id="TraesPARA_EIv1.0_2648380.1">
    <property type="protein sequence ID" value="TraesPARA_EIv1.0_2648380.1.CDS1"/>
    <property type="gene ID" value="TraesPARA_EIv1.0_2648380"/>
</dbReference>
<dbReference type="Gramene" id="TraesPARA_EIv1.0_2648780.1">
    <property type="protein sequence ID" value="TraesPARA_EIv1.0_2648780.1.CDS1"/>
    <property type="gene ID" value="TraesPARA_EIv1.0_2648780"/>
</dbReference>
<dbReference type="Gramene" id="TraesPARA_EIv1.0_2655680.1">
    <property type="protein sequence ID" value="TraesPARA_EIv1.0_2655680.1.CDS1"/>
    <property type="gene ID" value="TraesPARA_EIv1.0_2655680"/>
</dbReference>
<dbReference type="Gramene" id="TraesPARA_EIv1.0_2672930.1">
    <property type="protein sequence ID" value="TraesPARA_EIv1.0_2672930.1.CDS1"/>
    <property type="gene ID" value="TraesPARA_EIv1.0_2672930"/>
</dbReference>
<dbReference type="Gramene" id="TraesPARA_EIv1.0_2673990.1">
    <property type="protein sequence ID" value="TraesPARA_EIv1.0_2673990.1.CDS1"/>
    <property type="gene ID" value="TraesPARA_EIv1.0_2673990"/>
</dbReference>
<dbReference type="Gramene" id="TraesPARA_EIv1.0_2677720.1">
    <property type="protein sequence ID" value="TraesPARA_EIv1.0_2677720.1.CDS1"/>
    <property type="gene ID" value="TraesPARA_EIv1.0_2677720"/>
</dbReference>
<dbReference type="Gramene" id="TraesPARA_EIv1.0_2679950.1">
    <property type="protein sequence ID" value="TraesPARA_EIv1.0_2679950.1.CDS1"/>
    <property type="gene ID" value="TraesPARA_EIv1.0_2679950"/>
</dbReference>
<dbReference type="Gramene" id="TraesPARA_EIv1.0_2680580.1">
    <property type="protein sequence ID" value="TraesPARA_EIv1.0_2680580.1.CDS1"/>
    <property type="gene ID" value="TraesPARA_EIv1.0_2680580"/>
</dbReference>
<dbReference type="Gramene" id="TraesPARA_EIv1.0_2680630.1">
    <property type="protein sequence ID" value="TraesPARA_EIv1.0_2680630.1.CDS1"/>
    <property type="gene ID" value="TraesPARA_EIv1.0_2680630"/>
</dbReference>
<dbReference type="Gramene" id="TraesPARA_EIv1.0_2681560.1">
    <property type="protein sequence ID" value="TraesPARA_EIv1.0_2681560.1.CDS1"/>
    <property type="gene ID" value="TraesPARA_EIv1.0_2681560"/>
</dbReference>
<dbReference type="Gramene" id="TraesPARA_EIv1.0_2681880.1">
    <property type="protein sequence ID" value="TraesPARA_EIv1.0_2681880.1.CDS1"/>
    <property type="gene ID" value="TraesPARA_EIv1.0_2681880"/>
</dbReference>
<dbReference type="Gramene" id="TraesPARA_EIv1.0_2681910.1">
    <property type="protein sequence ID" value="TraesPARA_EIv1.0_2681910.1.CDS1"/>
    <property type="gene ID" value="TraesPARA_EIv1.0_2681910"/>
</dbReference>
<dbReference type="Gramene" id="TraesRN2D0101217400.1">
    <property type="protein sequence ID" value="TraesRN2D0101217400.1"/>
    <property type="gene ID" value="TraesRN2D0101217400"/>
</dbReference>
<dbReference type="Gramene" id="TraesRN3B0100445900.1">
    <property type="protein sequence ID" value="TraesRN3B0100445900.1"/>
    <property type="gene ID" value="TraesRN3B0100445900"/>
</dbReference>
<dbReference type="Gramene" id="TraesRN3D0101151700.1">
    <property type="protein sequence ID" value="TraesRN3D0101151700.1"/>
    <property type="gene ID" value="TraesRN3D0101151700"/>
</dbReference>
<dbReference type="Gramene" id="TraesRN5D0100889900.1">
    <property type="protein sequence ID" value="TraesRN5D0100889900.1"/>
    <property type="gene ID" value="TraesRN5D0100889900"/>
</dbReference>
<dbReference type="Gramene" id="TraesRN7A0100679400.1">
    <property type="protein sequence ID" value="TraesRN7A0100679400.1"/>
    <property type="gene ID" value="TraesRN7A0100679400"/>
</dbReference>
<dbReference type="Gramene" id="TraesSTA6B03G03545790.1">
    <property type="protein sequence ID" value="TraesSTA6B03G03545790.1.CDS1"/>
    <property type="gene ID" value="TraesSTA6B03G03545790"/>
</dbReference>
<dbReference type="KEGG" id="taes:803162"/>
<dbReference type="KEGG" id="taes:803174"/>
<dbReference type="eggNOG" id="KOG2815">
    <property type="taxonomic scope" value="Eukaryota"/>
</dbReference>
<dbReference type="HOGENOM" id="CLU_148518_1_1_1"/>
<dbReference type="OMA" id="RGFVEFQ"/>
<dbReference type="OrthoDB" id="364880at2759"/>
<dbReference type="Proteomes" id="UP000019116">
    <property type="component" value="Chloroplast"/>
</dbReference>
<dbReference type="ExpressionAtlas" id="P69661">
    <property type="expression patterns" value="baseline"/>
</dbReference>
<dbReference type="GO" id="GO:0009507">
    <property type="term" value="C:chloroplast"/>
    <property type="evidence" value="ECO:0007669"/>
    <property type="project" value="UniProtKB-SubCell"/>
</dbReference>
<dbReference type="GO" id="GO:1990904">
    <property type="term" value="C:ribonucleoprotein complex"/>
    <property type="evidence" value="ECO:0007669"/>
    <property type="project" value="UniProtKB-KW"/>
</dbReference>
<dbReference type="GO" id="GO:0005840">
    <property type="term" value="C:ribosome"/>
    <property type="evidence" value="ECO:0007669"/>
    <property type="project" value="UniProtKB-KW"/>
</dbReference>
<dbReference type="GO" id="GO:0003735">
    <property type="term" value="F:structural constituent of ribosome"/>
    <property type="evidence" value="ECO:0007669"/>
    <property type="project" value="InterPro"/>
</dbReference>
<dbReference type="GO" id="GO:0006412">
    <property type="term" value="P:translation"/>
    <property type="evidence" value="ECO:0007669"/>
    <property type="project" value="UniProtKB-UniRule"/>
</dbReference>
<dbReference type="Gene3D" id="1.10.287.10">
    <property type="entry name" value="S15/NS1, RNA-binding"/>
    <property type="match status" value="1"/>
</dbReference>
<dbReference type="HAMAP" id="MF_01343_B">
    <property type="entry name" value="Ribosomal_uS15_B"/>
    <property type="match status" value="1"/>
</dbReference>
<dbReference type="InterPro" id="IPR000589">
    <property type="entry name" value="Ribosomal_uS15"/>
</dbReference>
<dbReference type="InterPro" id="IPR005290">
    <property type="entry name" value="Ribosomal_uS15_bac-type"/>
</dbReference>
<dbReference type="InterPro" id="IPR009068">
    <property type="entry name" value="uS15_NS1_RNA-bd_sf"/>
</dbReference>
<dbReference type="NCBIfam" id="TIGR00952">
    <property type="entry name" value="S15_bact"/>
    <property type="match status" value="1"/>
</dbReference>
<dbReference type="PANTHER" id="PTHR23321">
    <property type="entry name" value="RIBOSOMAL PROTEIN S15, BACTERIAL AND ORGANELLAR"/>
    <property type="match status" value="1"/>
</dbReference>
<dbReference type="PANTHER" id="PTHR23321:SF26">
    <property type="entry name" value="SMALL RIBOSOMAL SUBUNIT PROTEIN US15M"/>
    <property type="match status" value="1"/>
</dbReference>
<dbReference type="Pfam" id="PF00312">
    <property type="entry name" value="Ribosomal_S15"/>
    <property type="match status" value="1"/>
</dbReference>
<dbReference type="SMART" id="SM01387">
    <property type="entry name" value="Ribosomal_S15"/>
    <property type="match status" value="1"/>
</dbReference>
<dbReference type="SUPFAM" id="SSF47060">
    <property type="entry name" value="S15/NS1 RNA-binding domain"/>
    <property type="match status" value="1"/>
</dbReference>
<dbReference type="PROSITE" id="PS00362">
    <property type="entry name" value="RIBOSOMAL_S15"/>
    <property type="match status" value="1"/>
</dbReference>
<evidence type="ECO:0000250" key="1"/>
<evidence type="ECO:0000305" key="2"/>
<comment type="subunit">
    <text evidence="1">Part of the 30S ribosomal subunit.</text>
</comment>
<comment type="subcellular location">
    <subcellularLocation>
        <location>Plastid</location>
        <location>Chloroplast</location>
    </subcellularLocation>
</comment>
<comment type="similarity">
    <text evidence="2">Belongs to the universal ribosomal protein uS15 family.</text>
</comment>
<reference key="1">
    <citation type="journal article" date="2000" name="Plant Mol. Biol. Rep.">
        <title>Chinese spring wheat (Triticum aestivum L.) chloroplast genome: complete sequence and contig clones.</title>
        <authorList>
            <person name="Ogihara Y."/>
            <person name="Isono K."/>
            <person name="Kojima T."/>
            <person name="Endo A."/>
            <person name="Hanaoka M."/>
            <person name="Shiina T."/>
            <person name="Terachi T."/>
            <person name="Utsugi S."/>
            <person name="Murata M."/>
            <person name="Mori N."/>
            <person name="Takumi S."/>
            <person name="Ikeo K."/>
            <person name="Gojobori T."/>
            <person name="Murai R."/>
            <person name="Murai K."/>
            <person name="Matsuoka Y."/>
            <person name="Ohnishi Y."/>
            <person name="Tajiri H."/>
            <person name="Tsunewaki K."/>
        </authorList>
    </citation>
    <scope>NUCLEOTIDE SEQUENCE [LARGE SCALE GENOMIC DNA]</scope>
    <source>
        <strain>cv. Chinese Spring</strain>
    </source>
</reference>
<gene>
    <name type="primary">rps15-A</name>
</gene>
<gene>
    <name type="primary">rps15-B</name>
</gene>
<name>RR15_WHEAT</name>
<sequence>MKKKGGRKIFGFMVKEEKEENRGSVEFQVFSFTNKIRRLASHLELHKKDFSSERGLRRLLGKRRRLLAYLAKKNRVRYKKLIGQLNIREQ</sequence>
<feature type="chain" id="PRO_0000115656" description="Small ribosomal subunit protein uS15c">
    <location>
        <begin position="1"/>
        <end position="90"/>
    </location>
</feature>
<accession>P69661</accession>
<accession>P20283</accession>
<protein>
    <recommendedName>
        <fullName evidence="2">Small ribosomal subunit protein uS15c</fullName>
    </recommendedName>
    <alternativeName>
        <fullName>30S ribosomal protein S15, chloroplastic</fullName>
    </alternativeName>
</protein>
<keyword id="KW-0150">Chloroplast</keyword>
<keyword id="KW-0934">Plastid</keyword>
<keyword id="KW-1185">Reference proteome</keyword>
<keyword id="KW-0687">Ribonucleoprotein</keyword>
<keyword id="KW-0689">Ribosomal protein</keyword>